<dbReference type="EC" id="1.8.4.11" evidence="1"/>
<dbReference type="EMBL" id="CP000305">
    <property type="protein sequence ID" value="ABG19596.1"/>
    <property type="molecule type" value="Genomic_DNA"/>
</dbReference>
<dbReference type="EMBL" id="ACNQ01000017">
    <property type="protein sequence ID" value="EEO75778.1"/>
    <property type="molecule type" value="Genomic_DNA"/>
</dbReference>
<dbReference type="RefSeq" id="WP_002210165.1">
    <property type="nucleotide sequence ID" value="NZ_ACNQ01000017.1"/>
</dbReference>
<dbReference type="SMR" id="Q1CEI4"/>
<dbReference type="GeneID" id="57975189"/>
<dbReference type="KEGG" id="ypn:YPN_3269"/>
<dbReference type="HOGENOM" id="CLU_031040_10_3_6"/>
<dbReference type="Proteomes" id="UP000008936">
    <property type="component" value="Chromosome"/>
</dbReference>
<dbReference type="GO" id="GO:0005737">
    <property type="term" value="C:cytoplasm"/>
    <property type="evidence" value="ECO:0007669"/>
    <property type="project" value="TreeGrafter"/>
</dbReference>
<dbReference type="GO" id="GO:0036456">
    <property type="term" value="F:L-methionine-(S)-S-oxide reductase activity"/>
    <property type="evidence" value="ECO:0007669"/>
    <property type="project" value="TreeGrafter"/>
</dbReference>
<dbReference type="GO" id="GO:0008113">
    <property type="term" value="F:peptide-methionine (S)-S-oxide reductase activity"/>
    <property type="evidence" value="ECO:0007669"/>
    <property type="project" value="UniProtKB-UniRule"/>
</dbReference>
<dbReference type="GO" id="GO:0034599">
    <property type="term" value="P:cellular response to oxidative stress"/>
    <property type="evidence" value="ECO:0007669"/>
    <property type="project" value="TreeGrafter"/>
</dbReference>
<dbReference type="GO" id="GO:0036211">
    <property type="term" value="P:protein modification process"/>
    <property type="evidence" value="ECO:0007669"/>
    <property type="project" value="UniProtKB-UniRule"/>
</dbReference>
<dbReference type="FunFam" id="3.30.1060.10:FF:000001">
    <property type="entry name" value="Peptide methionine sulfoxide reductase MsrA"/>
    <property type="match status" value="1"/>
</dbReference>
<dbReference type="Gene3D" id="3.30.1060.10">
    <property type="entry name" value="Peptide methionine sulphoxide reductase MsrA"/>
    <property type="match status" value="1"/>
</dbReference>
<dbReference type="HAMAP" id="MF_01401">
    <property type="entry name" value="MsrA"/>
    <property type="match status" value="1"/>
</dbReference>
<dbReference type="InterPro" id="IPR002569">
    <property type="entry name" value="Met_Sox_Rdtase_MsrA_dom"/>
</dbReference>
<dbReference type="InterPro" id="IPR036509">
    <property type="entry name" value="Met_Sox_Rdtase_MsrA_sf"/>
</dbReference>
<dbReference type="InterPro" id="IPR050162">
    <property type="entry name" value="MsrA_MetSO_reductase"/>
</dbReference>
<dbReference type="NCBIfam" id="TIGR00401">
    <property type="entry name" value="msrA"/>
    <property type="match status" value="1"/>
</dbReference>
<dbReference type="PANTHER" id="PTHR42799">
    <property type="entry name" value="MITOCHONDRIAL PEPTIDE METHIONINE SULFOXIDE REDUCTASE"/>
    <property type="match status" value="1"/>
</dbReference>
<dbReference type="PANTHER" id="PTHR42799:SF2">
    <property type="entry name" value="MITOCHONDRIAL PEPTIDE METHIONINE SULFOXIDE REDUCTASE"/>
    <property type="match status" value="1"/>
</dbReference>
<dbReference type="Pfam" id="PF01625">
    <property type="entry name" value="PMSR"/>
    <property type="match status" value="1"/>
</dbReference>
<dbReference type="SUPFAM" id="SSF55068">
    <property type="entry name" value="Peptide methionine sulfoxide reductase"/>
    <property type="match status" value="1"/>
</dbReference>
<gene>
    <name evidence="1" type="primary">msrA</name>
    <name type="ordered locus">YPN_3269</name>
    <name type="ORF">YP516_3713</name>
</gene>
<keyword id="KW-0560">Oxidoreductase</keyword>
<accession>Q1CEI4</accession>
<accession>C4GXX8</accession>
<comment type="function">
    <text evidence="1">Has an important function as a repair enzyme for proteins that have been inactivated by oxidation. Catalyzes the reversible oxidation-reduction of methionine sulfoxide in proteins to methionine.</text>
</comment>
<comment type="catalytic activity">
    <reaction evidence="1">
        <text>L-methionyl-[protein] + [thioredoxin]-disulfide + H2O = L-methionyl-(S)-S-oxide-[protein] + [thioredoxin]-dithiol</text>
        <dbReference type="Rhea" id="RHEA:14217"/>
        <dbReference type="Rhea" id="RHEA-COMP:10698"/>
        <dbReference type="Rhea" id="RHEA-COMP:10700"/>
        <dbReference type="Rhea" id="RHEA-COMP:12313"/>
        <dbReference type="Rhea" id="RHEA-COMP:12315"/>
        <dbReference type="ChEBI" id="CHEBI:15377"/>
        <dbReference type="ChEBI" id="CHEBI:16044"/>
        <dbReference type="ChEBI" id="CHEBI:29950"/>
        <dbReference type="ChEBI" id="CHEBI:44120"/>
        <dbReference type="ChEBI" id="CHEBI:50058"/>
        <dbReference type="EC" id="1.8.4.11"/>
    </reaction>
</comment>
<comment type="catalytic activity">
    <reaction evidence="1">
        <text>[thioredoxin]-disulfide + L-methionine + H2O = L-methionine (S)-S-oxide + [thioredoxin]-dithiol</text>
        <dbReference type="Rhea" id="RHEA:19993"/>
        <dbReference type="Rhea" id="RHEA-COMP:10698"/>
        <dbReference type="Rhea" id="RHEA-COMP:10700"/>
        <dbReference type="ChEBI" id="CHEBI:15377"/>
        <dbReference type="ChEBI" id="CHEBI:29950"/>
        <dbReference type="ChEBI" id="CHEBI:50058"/>
        <dbReference type="ChEBI" id="CHEBI:57844"/>
        <dbReference type="ChEBI" id="CHEBI:58772"/>
        <dbReference type="EC" id="1.8.4.11"/>
    </reaction>
</comment>
<comment type="similarity">
    <text evidence="1">Belongs to the MsrA Met sulfoxide reductase family.</text>
</comment>
<evidence type="ECO:0000255" key="1">
    <source>
        <dbReference type="HAMAP-Rule" id="MF_01401"/>
    </source>
</evidence>
<protein>
    <recommendedName>
        <fullName evidence="1">Peptide methionine sulfoxide reductase MsrA</fullName>
        <shortName evidence="1">Protein-methionine-S-oxide reductase</shortName>
        <ecNumber evidence="1">1.8.4.11</ecNumber>
    </recommendedName>
    <alternativeName>
        <fullName evidence="1">Peptide-methionine (S)-S-oxide reductase</fullName>
        <shortName evidence="1">Peptide Met(O) reductase</shortName>
    </alternativeName>
</protein>
<feature type="chain" id="PRO_1000068376" description="Peptide methionine sulfoxide reductase MsrA">
    <location>
        <begin position="1"/>
        <end position="212"/>
    </location>
</feature>
<feature type="active site" evidence="1">
    <location>
        <position position="52"/>
    </location>
</feature>
<name>MSRA_YERPN</name>
<sequence length="212" mass="23434">MQNVDNTAVIDAANALPGRLTSIPVSPLHAVHGHSMTYIPEGMDLAFFAMGCFWGAERLFWQQPGVYSTAAGYSGGHTPNPTYHEVCSGRTGHAEVVRVVFDPAVISYQQLLQIFWENHDPAQGMRQGGDVGTQYRSAIYVLTPEQEEQAHKSRERFQQAMEKAGDQRVITSEITVALPFYYAEDDHQQYLHKNPHGYCGLGGIGVCLPPNV</sequence>
<reference key="1">
    <citation type="journal article" date="2006" name="J. Bacteriol.">
        <title>Complete genome sequence of Yersinia pestis strains Antiqua and Nepal516: evidence of gene reduction in an emerging pathogen.</title>
        <authorList>
            <person name="Chain P.S.G."/>
            <person name="Hu P."/>
            <person name="Malfatti S.A."/>
            <person name="Radnedge L."/>
            <person name="Larimer F."/>
            <person name="Vergez L.M."/>
            <person name="Worsham P."/>
            <person name="Chu M.C."/>
            <person name="Andersen G.L."/>
        </authorList>
    </citation>
    <scope>NUCLEOTIDE SEQUENCE [LARGE SCALE GENOMIC DNA]</scope>
    <source>
        <strain>Nepal516</strain>
    </source>
</reference>
<reference key="2">
    <citation type="submission" date="2009-04" db="EMBL/GenBank/DDBJ databases">
        <title>Yersinia pestis Nepal516A whole genome shotgun sequencing project.</title>
        <authorList>
            <person name="Plunkett G. III"/>
            <person name="Anderson B.D."/>
            <person name="Baumler D.J."/>
            <person name="Burland V."/>
            <person name="Cabot E.L."/>
            <person name="Glasner J.D."/>
            <person name="Mau B."/>
            <person name="Neeno-Eckwall E."/>
            <person name="Perna N.T."/>
            <person name="Munk A.C."/>
            <person name="Tapia R."/>
            <person name="Green L.D."/>
            <person name="Rogers Y.C."/>
            <person name="Detter J.C."/>
            <person name="Bruce D.C."/>
            <person name="Brettin T.S."/>
        </authorList>
    </citation>
    <scope>NUCLEOTIDE SEQUENCE [LARGE SCALE GENOMIC DNA]</scope>
    <source>
        <strain>Nepal516</strain>
    </source>
</reference>
<organism>
    <name type="scientific">Yersinia pestis bv. Antiqua (strain Nepal516)</name>
    <dbReference type="NCBI Taxonomy" id="377628"/>
    <lineage>
        <taxon>Bacteria</taxon>
        <taxon>Pseudomonadati</taxon>
        <taxon>Pseudomonadota</taxon>
        <taxon>Gammaproteobacteria</taxon>
        <taxon>Enterobacterales</taxon>
        <taxon>Yersiniaceae</taxon>
        <taxon>Yersinia</taxon>
    </lineage>
</organism>
<proteinExistence type="inferred from homology"/>